<protein>
    <recommendedName>
        <fullName>Conotoxin AbVIN</fullName>
    </recommendedName>
</protein>
<reference key="1">
    <citation type="journal article" date="1999" name="Proc. Natl. Acad. Sci. U.S.A.">
        <title>Molecular genetics of ecological diversification: duplication and rapid evolution of toxin genes of the venomous gastropod Conus.</title>
        <authorList>
            <person name="Duda T.F. Jr."/>
            <person name="Palumbi S.R."/>
        </authorList>
    </citation>
    <scope>NUCLEOTIDE SEQUENCE [MRNA]</scope>
    <source>
        <tissue>Venom duct</tissue>
    </source>
</reference>
<reference key="2">
    <citation type="journal article" date="2004" name="Proc. R. Soc. B">
        <title>Gene expression and feeding ecology: evolution of piscivory in the venomous gastropod genus Conus.</title>
        <authorList>
            <person name="Duda T.F. Jr."/>
            <person name="Palumbi S.R."/>
        </authorList>
    </citation>
    <scope>NUCLEOTIDE SEQUENCE [MRNA]</scope>
    <source>
        <tissue>Venom duct</tissue>
    </source>
</reference>
<feature type="signal peptide" evidence="2">
    <location>
        <begin position="1" status="less than"/>
        <end position="17"/>
    </location>
</feature>
<feature type="propeptide" id="PRO_0000392136" evidence="1">
    <location>
        <begin position="18"/>
        <end position="40"/>
    </location>
</feature>
<feature type="peptide" id="PRO_0000392137" description="Conotoxin AbVIN">
    <location>
        <begin position="43"/>
        <end position="67"/>
    </location>
</feature>
<feature type="disulfide bond" evidence="1">
    <location>
        <begin position="43"/>
        <end position="57"/>
    </location>
</feature>
<feature type="disulfide bond" evidence="1">
    <location>
        <begin position="50"/>
        <end position="61"/>
    </location>
</feature>
<feature type="disulfide bond" evidence="1">
    <location>
        <begin position="56"/>
        <end position="66"/>
    </location>
</feature>
<feature type="sequence conflict" description="In Ref. 1 and 2; AAD48323." evidence="3" ref="1 2">
    <original>L</original>
    <variation>I</variation>
    <location>
        <position position="39"/>
    </location>
</feature>
<feature type="sequence conflict" description="In Ref. 1 and 2; AAD48323." evidence="3" ref="1 2">
    <original>C</original>
    <variation>S</variation>
    <location>
        <position position="50"/>
    </location>
</feature>
<feature type="sequence conflict" description="In Ref. 1 and 2; AAD48315." evidence="3" ref="1 2">
    <original>F</original>
    <variation>C</variation>
    <location>
        <position position="67"/>
    </location>
</feature>
<feature type="non-terminal residue">
    <location>
        <position position="1"/>
    </location>
</feature>
<sequence length="67" mass="7471">VIIIAVLFLTACQLIATASYARSERKHPDLRLSSRNSKLSKRCLGSREQCVRDTSCCSMSCTNNICF</sequence>
<comment type="subcellular location">
    <subcellularLocation>
        <location evidence="1">Secreted</location>
    </subcellularLocation>
</comment>
<comment type="tissue specificity">
    <text>Expressed by the venom duct.</text>
</comment>
<comment type="domain">
    <text evidence="1">The presence of a 'disulfide through disulfide knot' structurally defines this protein as a knottin.</text>
</comment>
<comment type="domain">
    <text>The cysteine framework is VI/VII (C-C-CC-C-C).</text>
</comment>
<comment type="similarity">
    <text evidence="3">Belongs to the conotoxin O1 superfamily.</text>
</comment>
<keyword id="KW-0165">Cleavage on pair of basic residues</keyword>
<keyword id="KW-1015">Disulfide bond</keyword>
<keyword id="KW-0960">Knottin</keyword>
<keyword id="KW-0964">Secreted</keyword>
<keyword id="KW-0732">Signal</keyword>
<keyword id="KW-0800">Toxin</keyword>
<proteinExistence type="evidence at transcript level"/>
<dbReference type="EMBL" id="AF090055">
    <property type="protein sequence ID" value="AAD48308.1"/>
    <property type="molecule type" value="mRNA"/>
</dbReference>
<dbReference type="EMBL" id="AF090056">
    <property type="protein sequence ID" value="AAD48309.1"/>
    <property type="molecule type" value="mRNA"/>
</dbReference>
<dbReference type="EMBL" id="AF090057">
    <property type="protein sequence ID" value="AAD48310.1"/>
    <property type="molecule type" value="mRNA"/>
</dbReference>
<dbReference type="EMBL" id="AF090058">
    <property type="protein sequence ID" value="AAD48311.1"/>
    <property type="molecule type" value="mRNA"/>
</dbReference>
<dbReference type="EMBL" id="AF090059">
    <property type="protein sequence ID" value="AAD48312.1"/>
    <property type="molecule type" value="mRNA"/>
</dbReference>
<dbReference type="EMBL" id="AF090060">
    <property type="protein sequence ID" value="AAD48313.1"/>
    <property type="molecule type" value="mRNA"/>
</dbReference>
<dbReference type="EMBL" id="AF090061">
    <property type="protein sequence ID" value="AAD48314.1"/>
    <property type="molecule type" value="mRNA"/>
</dbReference>
<dbReference type="EMBL" id="AF090062">
    <property type="protein sequence ID" value="AAD48315.1"/>
    <property type="molecule type" value="mRNA"/>
</dbReference>
<dbReference type="EMBL" id="AF090063">
    <property type="protein sequence ID" value="AAD48316.1"/>
    <property type="molecule type" value="mRNA"/>
</dbReference>
<dbReference type="EMBL" id="AF090070">
    <property type="protein sequence ID" value="AAD48323.1"/>
    <property type="molecule type" value="mRNA"/>
</dbReference>
<dbReference type="SMR" id="Q9TVQ6"/>
<dbReference type="ConoServer" id="1037">
    <property type="toxin name" value="ABVIN mutant 1 precursor"/>
</dbReference>
<dbReference type="ConoServer" id="1045">
    <property type="toxin name" value="ABVIN mutant 2 precursor"/>
</dbReference>
<dbReference type="ConoServer" id="1030">
    <property type="toxin name" value="ABVIN precursor"/>
</dbReference>
<dbReference type="GO" id="GO:0005576">
    <property type="term" value="C:extracellular region"/>
    <property type="evidence" value="ECO:0007669"/>
    <property type="project" value="UniProtKB-SubCell"/>
</dbReference>
<dbReference type="GO" id="GO:0008200">
    <property type="term" value="F:ion channel inhibitor activity"/>
    <property type="evidence" value="ECO:0007669"/>
    <property type="project" value="InterPro"/>
</dbReference>
<dbReference type="GO" id="GO:0090729">
    <property type="term" value="F:toxin activity"/>
    <property type="evidence" value="ECO:0007669"/>
    <property type="project" value="UniProtKB-KW"/>
</dbReference>
<dbReference type="InterPro" id="IPR004214">
    <property type="entry name" value="Conotoxin"/>
</dbReference>
<dbReference type="Pfam" id="PF02950">
    <property type="entry name" value="Conotoxin"/>
    <property type="match status" value="1"/>
</dbReference>
<name>O16N_CONAB</name>
<evidence type="ECO:0000250" key="1"/>
<evidence type="ECO:0000255" key="2"/>
<evidence type="ECO:0000305" key="3"/>
<accession>Q9TVQ6</accession>
<accession>Q9UA74</accession>
<accession>Q9UA75</accession>
<organism>
    <name type="scientific">Conus abbreviatus</name>
    <name type="common">Abbreviated cone</name>
    <name type="synonym">Miliariconus abbreviatus</name>
    <dbReference type="NCBI Taxonomy" id="100123"/>
    <lineage>
        <taxon>Eukaryota</taxon>
        <taxon>Metazoa</taxon>
        <taxon>Spiralia</taxon>
        <taxon>Lophotrochozoa</taxon>
        <taxon>Mollusca</taxon>
        <taxon>Gastropoda</taxon>
        <taxon>Caenogastropoda</taxon>
        <taxon>Neogastropoda</taxon>
        <taxon>Conoidea</taxon>
        <taxon>Conidae</taxon>
        <taxon>Conus</taxon>
        <taxon>Virroconus</taxon>
    </lineage>
</organism>